<dbReference type="EC" id="1.5.1.5" evidence="1"/>
<dbReference type="EC" id="3.5.4.9" evidence="1"/>
<dbReference type="EMBL" id="AE014133">
    <property type="protein sequence ID" value="AAN58313.1"/>
    <property type="molecule type" value="Genomic_DNA"/>
</dbReference>
<dbReference type="RefSeq" id="NP_721007.1">
    <property type="nucleotide sequence ID" value="NC_004350.2"/>
</dbReference>
<dbReference type="RefSeq" id="WP_002263561.1">
    <property type="nucleotide sequence ID" value="NC_004350.2"/>
</dbReference>
<dbReference type="SMR" id="Q8DVC1"/>
<dbReference type="STRING" id="210007.SMU_572"/>
<dbReference type="KEGG" id="smu:SMU_572"/>
<dbReference type="PATRIC" id="fig|210007.7.peg.507"/>
<dbReference type="eggNOG" id="COG0190">
    <property type="taxonomic scope" value="Bacteria"/>
</dbReference>
<dbReference type="HOGENOM" id="CLU_034045_2_1_9"/>
<dbReference type="OrthoDB" id="9803580at2"/>
<dbReference type="PhylomeDB" id="Q8DVC1"/>
<dbReference type="UniPathway" id="UPA00193"/>
<dbReference type="Proteomes" id="UP000002512">
    <property type="component" value="Chromosome"/>
</dbReference>
<dbReference type="GO" id="GO:0005829">
    <property type="term" value="C:cytosol"/>
    <property type="evidence" value="ECO:0007669"/>
    <property type="project" value="TreeGrafter"/>
</dbReference>
<dbReference type="GO" id="GO:0004477">
    <property type="term" value="F:methenyltetrahydrofolate cyclohydrolase activity"/>
    <property type="evidence" value="ECO:0007669"/>
    <property type="project" value="UniProtKB-UniRule"/>
</dbReference>
<dbReference type="GO" id="GO:0004488">
    <property type="term" value="F:methylenetetrahydrofolate dehydrogenase (NADP+) activity"/>
    <property type="evidence" value="ECO:0007669"/>
    <property type="project" value="UniProtKB-UniRule"/>
</dbReference>
<dbReference type="GO" id="GO:0000105">
    <property type="term" value="P:L-histidine biosynthetic process"/>
    <property type="evidence" value="ECO:0007669"/>
    <property type="project" value="UniProtKB-KW"/>
</dbReference>
<dbReference type="GO" id="GO:0009086">
    <property type="term" value="P:methionine biosynthetic process"/>
    <property type="evidence" value="ECO:0007669"/>
    <property type="project" value="UniProtKB-KW"/>
</dbReference>
<dbReference type="GO" id="GO:0006164">
    <property type="term" value="P:purine nucleotide biosynthetic process"/>
    <property type="evidence" value="ECO:0007669"/>
    <property type="project" value="UniProtKB-KW"/>
</dbReference>
<dbReference type="GO" id="GO:0035999">
    <property type="term" value="P:tetrahydrofolate interconversion"/>
    <property type="evidence" value="ECO:0007669"/>
    <property type="project" value="UniProtKB-UniRule"/>
</dbReference>
<dbReference type="CDD" id="cd01080">
    <property type="entry name" value="NAD_bind_m-THF_DH_Cyclohyd"/>
    <property type="match status" value="1"/>
</dbReference>
<dbReference type="FunFam" id="3.40.50.720:FF:000094">
    <property type="entry name" value="Bifunctional protein FolD"/>
    <property type="match status" value="1"/>
</dbReference>
<dbReference type="FunFam" id="3.40.50.10860:FF:000005">
    <property type="entry name" value="C-1-tetrahydrofolate synthase, cytoplasmic, putative"/>
    <property type="match status" value="1"/>
</dbReference>
<dbReference type="Gene3D" id="3.40.50.10860">
    <property type="entry name" value="Leucine Dehydrogenase, chain A, domain 1"/>
    <property type="match status" value="1"/>
</dbReference>
<dbReference type="Gene3D" id="3.40.50.720">
    <property type="entry name" value="NAD(P)-binding Rossmann-like Domain"/>
    <property type="match status" value="1"/>
</dbReference>
<dbReference type="HAMAP" id="MF_01576">
    <property type="entry name" value="THF_DHG_CYH"/>
    <property type="match status" value="1"/>
</dbReference>
<dbReference type="InterPro" id="IPR046346">
    <property type="entry name" value="Aminoacid_DH-like_N_sf"/>
</dbReference>
<dbReference type="InterPro" id="IPR036291">
    <property type="entry name" value="NAD(P)-bd_dom_sf"/>
</dbReference>
<dbReference type="InterPro" id="IPR000672">
    <property type="entry name" value="THF_DH/CycHdrlase"/>
</dbReference>
<dbReference type="InterPro" id="IPR020630">
    <property type="entry name" value="THF_DH/CycHdrlase_cat_dom"/>
</dbReference>
<dbReference type="InterPro" id="IPR020867">
    <property type="entry name" value="THF_DH/CycHdrlase_CS"/>
</dbReference>
<dbReference type="InterPro" id="IPR020631">
    <property type="entry name" value="THF_DH/CycHdrlase_NAD-bd_dom"/>
</dbReference>
<dbReference type="NCBIfam" id="NF008058">
    <property type="entry name" value="PRK10792.1"/>
    <property type="match status" value="1"/>
</dbReference>
<dbReference type="NCBIfam" id="NF010776">
    <property type="entry name" value="PRK14179.1"/>
    <property type="match status" value="1"/>
</dbReference>
<dbReference type="NCBIfam" id="NF010783">
    <property type="entry name" value="PRK14186.1"/>
    <property type="match status" value="1"/>
</dbReference>
<dbReference type="PANTHER" id="PTHR48099:SF5">
    <property type="entry name" value="C-1-TETRAHYDROFOLATE SYNTHASE, CYTOPLASMIC"/>
    <property type="match status" value="1"/>
</dbReference>
<dbReference type="PANTHER" id="PTHR48099">
    <property type="entry name" value="C-1-TETRAHYDROFOLATE SYNTHASE, CYTOPLASMIC-RELATED"/>
    <property type="match status" value="1"/>
</dbReference>
<dbReference type="Pfam" id="PF00763">
    <property type="entry name" value="THF_DHG_CYH"/>
    <property type="match status" value="1"/>
</dbReference>
<dbReference type="Pfam" id="PF02882">
    <property type="entry name" value="THF_DHG_CYH_C"/>
    <property type="match status" value="1"/>
</dbReference>
<dbReference type="PRINTS" id="PR00085">
    <property type="entry name" value="THFDHDRGNASE"/>
</dbReference>
<dbReference type="SUPFAM" id="SSF53223">
    <property type="entry name" value="Aminoacid dehydrogenase-like, N-terminal domain"/>
    <property type="match status" value="1"/>
</dbReference>
<dbReference type="SUPFAM" id="SSF51735">
    <property type="entry name" value="NAD(P)-binding Rossmann-fold domains"/>
    <property type="match status" value="1"/>
</dbReference>
<dbReference type="PROSITE" id="PS00766">
    <property type="entry name" value="THF_DHG_CYH_1"/>
    <property type="match status" value="1"/>
</dbReference>
<dbReference type="PROSITE" id="PS00767">
    <property type="entry name" value="THF_DHG_CYH_2"/>
    <property type="match status" value="1"/>
</dbReference>
<keyword id="KW-0028">Amino-acid biosynthesis</keyword>
<keyword id="KW-0368">Histidine biosynthesis</keyword>
<keyword id="KW-0378">Hydrolase</keyword>
<keyword id="KW-0486">Methionine biosynthesis</keyword>
<keyword id="KW-0511">Multifunctional enzyme</keyword>
<keyword id="KW-0521">NADP</keyword>
<keyword id="KW-0554">One-carbon metabolism</keyword>
<keyword id="KW-0560">Oxidoreductase</keyword>
<keyword id="KW-0658">Purine biosynthesis</keyword>
<keyword id="KW-1185">Reference proteome</keyword>
<gene>
    <name evidence="1" type="primary">folD</name>
    <name type="ordered locus">SMU_572</name>
</gene>
<comment type="function">
    <text evidence="1">Catalyzes the oxidation of 5,10-methylenetetrahydrofolate to 5,10-methenyltetrahydrofolate and then the hydrolysis of 5,10-methenyltetrahydrofolate to 10-formyltetrahydrofolate.</text>
</comment>
<comment type="catalytic activity">
    <reaction evidence="1">
        <text>(6R)-5,10-methylene-5,6,7,8-tetrahydrofolate + NADP(+) = (6R)-5,10-methenyltetrahydrofolate + NADPH</text>
        <dbReference type="Rhea" id="RHEA:22812"/>
        <dbReference type="ChEBI" id="CHEBI:15636"/>
        <dbReference type="ChEBI" id="CHEBI:57455"/>
        <dbReference type="ChEBI" id="CHEBI:57783"/>
        <dbReference type="ChEBI" id="CHEBI:58349"/>
        <dbReference type="EC" id="1.5.1.5"/>
    </reaction>
</comment>
<comment type="catalytic activity">
    <reaction evidence="1">
        <text>(6R)-5,10-methenyltetrahydrofolate + H2O = (6R)-10-formyltetrahydrofolate + H(+)</text>
        <dbReference type="Rhea" id="RHEA:23700"/>
        <dbReference type="ChEBI" id="CHEBI:15377"/>
        <dbReference type="ChEBI" id="CHEBI:15378"/>
        <dbReference type="ChEBI" id="CHEBI:57455"/>
        <dbReference type="ChEBI" id="CHEBI:195366"/>
        <dbReference type="EC" id="3.5.4.9"/>
    </reaction>
</comment>
<comment type="pathway">
    <text evidence="1">One-carbon metabolism; tetrahydrofolate interconversion.</text>
</comment>
<comment type="subunit">
    <text evidence="1">Homodimer.</text>
</comment>
<comment type="similarity">
    <text evidence="1">Belongs to the tetrahydrofolate dehydrogenase/cyclohydrolase family.</text>
</comment>
<organism>
    <name type="scientific">Streptococcus mutans serotype c (strain ATCC 700610 / UA159)</name>
    <dbReference type="NCBI Taxonomy" id="210007"/>
    <lineage>
        <taxon>Bacteria</taxon>
        <taxon>Bacillati</taxon>
        <taxon>Bacillota</taxon>
        <taxon>Bacilli</taxon>
        <taxon>Lactobacillales</taxon>
        <taxon>Streptococcaceae</taxon>
        <taxon>Streptococcus</taxon>
    </lineage>
</organism>
<accession>Q8DVC1</accession>
<evidence type="ECO:0000255" key="1">
    <source>
        <dbReference type="HAMAP-Rule" id="MF_01576"/>
    </source>
</evidence>
<reference key="1">
    <citation type="journal article" date="2002" name="Proc. Natl. Acad. Sci. U.S.A.">
        <title>Genome sequence of Streptococcus mutans UA159, a cariogenic dental pathogen.</title>
        <authorList>
            <person name="Ajdic D.J."/>
            <person name="McShan W.M."/>
            <person name="McLaughlin R.E."/>
            <person name="Savic G."/>
            <person name="Chang J."/>
            <person name="Carson M.B."/>
            <person name="Primeaux C."/>
            <person name="Tian R."/>
            <person name="Kenton S."/>
            <person name="Jia H.G."/>
            <person name="Lin S.P."/>
            <person name="Qian Y."/>
            <person name="Li S."/>
            <person name="Zhu H."/>
            <person name="Najar F.Z."/>
            <person name="Lai H."/>
            <person name="White J."/>
            <person name="Roe B.A."/>
            <person name="Ferretti J.J."/>
        </authorList>
    </citation>
    <scope>NUCLEOTIDE SEQUENCE [LARGE SCALE GENOMIC DNA]</scope>
    <source>
        <strain>ATCC 700610 / UA159</strain>
    </source>
</reference>
<feature type="chain" id="PRO_0000268511" description="Bifunctional protein FolD">
    <location>
        <begin position="1"/>
        <end position="284"/>
    </location>
</feature>
<feature type="binding site" evidence="1">
    <location>
        <begin position="165"/>
        <end position="167"/>
    </location>
    <ligand>
        <name>NADP(+)</name>
        <dbReference type="ChEBI" id="CHEBI:58349"/>
    </ligand>
</feature>
<feature type="binding site" evidence="1">
    <location>
        <position position="190"/>
    </location>
    <ligand>
        <name>NADP(+)</name>
        <dbReference type="ChEBI" id="CHEBI:58349"/>
    </ligand>
</feature>
<protein>
    <recommendedName>
        <fullName evidence="1">Bifunctional protein FolD</fullName>
    </recommendedName>
    <domain>
        <recommendedName>
            <fullName evidence="1">Methylenetetrahydrofolate dehydrogenase</fullName>
            <ecNumber evidence="1">1.5.1.5</ecNumber>
        </recommendedName>
    </domain>
    <domain>
        <recommendedName>
            <fullName evidence="1">Methenyltetrahydrofolate cyclohydrolase</fullName>
            <ecNumber evidence="1">3.5.4.9</ecNumber>
        </recommendedName>
    </domain>
</protein>
<proteinExistence type="inferred from homology"/>
<name>FOLD_STRMU</name>
<sequence>MTEIIDGKALAQKLQLHLANKVEQMKEKHGLVPGLVVILVGDNPASQVYVRNKERSAIKAGFKSETICLSDSISEEELIEIIEGYNQDPSFHGILVQLPLPAHINDKKIILAIDPHKDVDGFHPMNTGHLWSGRSMMVPCTPAGIMEMLSAYHVDLEGKHAVIIGRSNIVGKPMAQLLLEKNATVTLTHSRTKHLSEVTRCADVLIVAIGQGNFVTEEFVKEGAVVIDVGMNRDKNGKLIGDVNFDHVAQKASLITPVPGGVGPMTITMLLEQTYQAALRSVTK</sequence>